<organism>
    <name type="scientific">Human parainfluenza 2 virus</name>
    <name type="common">HPIV-2</name>
    <dbReference type="NCBI Taxonomy" id="2560525"/>
    <lineage>
        <taxon>Viruses</taxon>
        <taxon>Riboviria</taxon>
        <taxon>Orthornavirae</taxon>
        <taxon>Negarnaviricota</taxon>
        <taxon>Haploviricotina</taxon>
        <taxon>Monjiviricetes</taxon>
        <taxon>Mononegavirales</taxon>
        <taxon>Paramyxoviridae</taxon>
        <taxon>Rubulavirinae</taxon>
        <taxon>Orthorubulavirus</taxon>
        <taxon>Orthorubulavirus laryngotracheitidis</taxon>
    </lineage>
</organism>
<feature type="signal peptide" evidence="2">
    <location>
        <begin position="1"/>
        <end position="23"/>
    </location>
</feature>
<feature type="chain" id="PRO_0000039333" description="Fusion glycoprotein F0">
    <location>
        <begin position="24"/>
        <end position="551"/>
    </location>
</feature>
<feature type="chain" id="PRO_0000039334" description="Fusion glycoprotein F2">
    <location>
        <begin position="24"/>
        <end position="106"/>
    </location>
</feature>
<feature type="chain" id="PRO_0000039335" description="Fusion glycoprotein F1">
    <location>
        <begin position="107"/>
        <end position="551"/>
    </location>
</feature>
<feature type="topological domain" description="Extracellular" evidence="1">
    <location>
        <begin position="24"/>
        <end position="492"/>
    </location>
</feature>
<feature type="transmembrane region" description="Helical" evidence="1">
    <location>
        <begin position="493"/>
        <end position="513"/>
    </location>
</feature>
<feature type="topological domain" description="Cytoplasmic" evidence="1">
    <location>
        <begin position="514"/>
        <end position="551"/>
    </location>
</feature>
<feature type="region of interest" description="Fusion peptide" evidence="1">
    <location>
        <begin position="107"/>
        <end position="131"/>
    </location>
</feature>
<feature type="coiled-coil region" evidence="2">
    <location>
        <begin position="132"/>
        <end position="160"/>
    </location>
</feature>
<feature type="coiled-coil region" evidence="2">
    <location>
        <begin position="456"/>
        <end position="481"/>
    </location>
</feature>
<feature type="site" description="Cleavage; by host" evidence="1">
    <location>
        <begin position="106"/>
        <end position="107"/>
    </location>
</feature>
<feature type="glycosylation site" description="N-linked (GlcNAc...) asparagine; by host" evidence="2">
    <location>
        <position position="65"/>
    </location>
</feature>
<feature type="glycosylation site" description="N-linked (GlcNAc...) asparagine; by host" evidence="2">
    <location>
        <position position="69"/>
    </location>
</feature>
<feature type="glycosylation site" description="N-linked (GlcNAc...) asparagine; by host" evidence="2">
    <location>
        <position position="77"/>
    </location>
</feature>
<feature type="glycosylation site" description="N-linked (GlcNAc...) asparagine; by host" evidence="2">
    <location>
        <position position="90"/>
    </location>
</feature>
<feature type="glycosylation site" description="N-linked (GlcNAc...) asparagine; by host" evidence="2">
    <location>
        <position position="431"/>
    </location>
</feature>
<feature type="glycosylation site" description="N-linked (GlcNAc...) asparagine; by host" evidence="2">
    <location>
        <position position="461"/>
    </location>
</feature>
<feature type="disulfide bond" description="Interchain (between F2 and F1 chains)" evidence="1">
    <location>
        <begin position="68"/>
        <end position="189"/>
    </location>
</feature>
<feature type="disulfide bond" evidence="1">
    <location>
        <begin position="328"/>
        <end position="337"/>
    </location>
</feature>
<feature type="disulfide bond" evidence="1">
    <location>
        <begin position="352"/>
        <end position="360"/>
    </location>
</feature>
<feature type="disulfide bond" evidence="1">
    <location>
        <begin position="384"/>
        <end position="389"/>
    </location>
</feature>
<feature type="disulfide bond" evidence="1">
    <location>
        <begin position="391"/>
        <end position="414"/>
    </location>
</feature>
<keyword id="KW-0165">Cleavage on pair of basic residues</keyword>
<keyword id="KW-0175">Coiled coil</keyword>
<keyword id="KW-1015">Disulfide bond</keyword>
<keyword id="KW-1169">Fusion of virus membrane with host cell membrane</keyword>
<keyword id="KW-1168">Fusion of virus membrane with host membrane</keyword>
<keyword id="KW-0325">Glycoprotein</keyword>
<keyword id="KW-1032">Host cell membrane</keyword>
<keyword id="KW-1043">Host membrane</keyword>
<keyword id="KW-0472">Membrane</keyword>
<keyword id="KW-0732">Signal</keyword>
<keyword id="KW-0812">Transmembrane</keyword>
<keyword id="KW-1133">Transmembrane helix</keyword>
<keyword id="KW-0261">Viral envelope protein</keyword>
<keyword id="KW-1162">Viral penetration into host cytoplasm</keyword>
<keyword id="KW-0946">Virion</keyword>
<keyword id="KW-1160">Virus entry into host cell</keyword>
<sequence>MHHLHPMIVCIFVMYTGIVGSDAIAGDQLLNIGVIQSKIRSLMYYTDGGASFIVVKLLPNLPPSNGTCNITSLDAYNVTLFKLLTPLIENLSKISTVTDTKTRQKRFAGVVVGLAALGVATAAQITAAVAIVKANANAAAINNLASSIQSTNKAVSDVIDASRTIATAVQAIQDHINGAIVNGITSASCRAHDALIGSILNLYLTELTTIFHNQITNPALTPLSIQALRILLGSTLPIVIESKLNTNLNTAELLSSGLLTGQIISISPMYMQMLIQINVPTFIMQPGAKVIDLIAISANHKLQEVVVQVPNRILEYANELQNYPANDCVVTPNSVFCRYNEGSPIPESQYQCLRGNLNSCTFTPIIGNFLKRFAFANGVLYANCKSLLCRCADPPHVVSQDDTQGISIIDIKRCSEMMLDTFSFRITSTFNATYVTDFSMINANIVHLSPLDLSNQINSINKSLKSAEDWIADSNFFANQARTAKTLYSLSAIALILSVITLVVVGLLIAYIIKLVSQIHQFRSLAATTMFHRENPAFFSKNNHGNIYGIS</sequence>
<name>FUS_PI2H</name>
<proteinExistence type="evidence at transcript level"/>
<protein>
    <recommendedName>
        <fullName>Fusion glycoprotein F0</fullName>
    </recommendedName>
    <component>
        <recommendedName>
            <fullName>Fusion glycoprotein F2</fullName>
        </recommendedName>
    </component>
    <component>
        <recommendedName>
            <fullName>Fusion glycoprotein F1</fullName>
        </recommendedName>
    </component>
</protein>
<organismHost>
    <name type="scientific">Homo sapiens</name>
    <name type="common">Human</name>
    <dbReference type="NCBI Taxonomy" id="9606"/>
</organismHost>
<dbReference type="EMBL" id="M60182">
    <property type="protein sequence ID" value="AAA46843.1"/>
    <property type="molecule type" value="mRNA"/>
</dbReference>
<dbReference type="SMR" id="P25467"/>
<dbReference type="GlyCosmos" id="P25467">
    <property type="glycosylation" value="6 sites, No reported glycans"/>
</dbReference>
<dbReference type="GO" id="GO:0020002">
    <property type="term" value="C:host cell plasma membrane"/>
    <property type="evidence" value="ECO:0007669"/>
    <property type="project" value="UniProtKB-SubCell"/>
</dbReference>
<dbReference type="GO" id="GO:0016020">
    <property type="term" value="C:membrane"/>
    <property type="evidence" value="ECO:0007669"/>
    <property type="project" value="UniProtKB-KW"/>
</dbReference>
<dbReference type="GO" id="GO:0019031">
    <property type="term" value="C:viral envelope"/>
    <property type="evidence" value="ECO:0007669"/>
    <property type="project" value="UniProtKB-KW"/>
</dbReference>
<dbReference type="GO" id="GO:0055036">
    <property type="term" value="C:virion membrane"/>
    <property type="evidence" value="ECO:0007669"/>
    <property type="project" value="UniProtKB-SubCell"/>
</dbReference>
<dbReference type="GO" id="GO:0019064">
    <property type="term" value="P:fusion of virus membrane with host plasma membrane"/>
    <property type="evidence" value="ECO:0007669"/>
    <property type="project" value="UniProtKB-KW"/>
</dbReference>
<dbReference type="GO" id="GO:0046718">
    <property type="term" value="P:symbiont entry into host cell"/>
    <property type="evidence" value="ECO:0007669"/>
    <property type="project" value="UniProtKB-KW"/>
</dbReference>
<dbReference type="Gene3D" id="1.20.5.300">
    <property type="match status" value="1"/>
</dbReference>
<dbReference type="Gene3D" id="6.10.10.110">
    <property type="match status" value="1"/>
</dbReference>
<dbReference type="Gene3D" id="2.60.40.1690">
    <property type="entry name" value="Head and neck region of the ectodomain of NDV fusion glycoprotein"/>
    <property type="match status" value="1"/>
</dbReference>
<dbReference type="Gene3D" id="2.40.490.10">
    <property type="entry name" value="Newcastle disease virus like domain"/>
    <property type="match status" value="1"/>
</dbReference>
<dbReference type="InterPro" id="IPR000776">
    <property type="entry name" value="Fusion_F0_Paramyxovir"/>
</dbReference>
<dbReference type="Pfam" id="PF00523">
    <property type="entry name" value="Fusion_gly"/>
    <property type="match status" value="1"/>
</dbReference>
<dbReference type="SUPFAM" id="SSF69922">
    <property type="entry name" value="Head and neck region of the ectodomain of NDV fusion glycoprotein"/>
    <property type="match status" value="1"/>
</dbReference>
<dbReference type="SUPFAM" id="SSF58069">
    <property type="entry name" value="Virus ectodomain"/>
    <property type="match status" value="1"/>
</dbReference>
<evidence type="ECO:0000250" key="1"/>
<evidence type="ECO:0000255" key="2"/>
<evidence type="ECO:0000305" key="3"/>
<reference key="1">
    <citation type="journal article" date="1990" name="Virology">
        <title>Molecular cloning and sequence analysis of the fusion glycoprotein gene of human parainfluenza virus type 2.</title>
        <authorList>
            <person name="Hu X."/>
            <person name="Compans R.W."/>
            <person name="Matsuoka Y."/>
            <person name="Ray R."/>
        </authorList>
    </citation>
    <scope>NUCLEOTIDE SEQUENCE [MRNA]</scope>
</reference>
<accession>P25467</accession>
<gene>
    <name type="primary">F</name>
</gene>
<comment type="function">
    <text evidence="1">Class I viral fusion protein. Under the current model, the protein has at least 3 conformational states: pre-fusion native state, pre-hairpin intermediate state, and post-fusion hairpin state. During viral and plasma cell membrane fusion, the heptad repeat (HR) regions assume a trimer-of-hairpins structure, positioning the fusion peptide in close proximity to the C-terminal region of the ectodomain. The formation of this structure appears to drive apposition and subsequent fusion of viral and plasma cell membranes. Directs fusion of viral and cellular membranes leading to delivery of the nucleocapsid into the cytoplasm. This fusion is pH independent and occurs directly at the outer cell membrane. The trimer of F1-F2 (F protein) probably interacts with HN at the virion surface. Upon HN binding to its cellular receptor, the hydrophobic fusion peptide is unmasked and interacts with the cellular membrane, inducing the fusion between cell and virion membranes. Later in infection, F proteins expressed at the plasma membrane of infected cells could mediate fusion with adjacent cells to form syncytia, a cytopathic effect that could lead to tissue necrosis (By similarity).</text>
</comment>
<comment type="subunit">
    <text evidence="1">Homotrimer of disulfide-linked F1-F2.</text>
</comment>
<comment type="subcellular location">
    <subcellularLocation>
        <location evidence="1">Virion membrane</location>
        <topology evidence="1">Single-pass type I membrane protein</topology>
    </subcellularLocation>
    <subcellularLocation>
        <location evidence="1">Host cell membrane</location>
        <topology evidence="1">Single-pass membrane protein</topology>
    </subcellularLocation>
</comment>
<comment type="PTM">
    <text evidence="1">The inactive precursor F0 is glycosylated and proteolytically cleaved into F1 and F2 to be functionally active. The cleavage is mediated by cellular proteases during the transport and maturation of the polypeptide (By similarity).</text>
</comment>
<comment type="similarity">
    <text evidence="3">Belongs to the paramyxoviruses fusion glycoprotein family.</text>
</comment>